<name>ARGR1_BACCR</name>
<reference key="1">
    <citation type="journal article" date="2003" name="Nature">
        <title>Genome sequence of Bacillus cereus and comparative analysis with Bacillus anthracis.</title>
        <authorList>
            <person name="Ivanova N."/>
            <person name="Sorokin A."/>
            <person name="Anderson I."/>
            <person name="Galleron N."/>
            <person name="Candelon B."/>
            <person name="Kapatral V."/>
            <person name="Bhattacharyya A."/>
            <person name="Reznik G."/>
            <person name="Mikhailova N."/>
            <person name="Lapidus A."/>
            <person name="Chu L."/>
            <person name="Mazur M."/>
            <person name="Goltsman E."/>
            <person name="Larsen N."/>
            <person name="D'Souza M."/>
            <person name="Walunas T."/>
            <person name="Grechkin Y."/>
            <person name="Pusch G."/>
            <person name="Haselkorn R."/>
            <person name="Fonstein M."/>
            <person name="Ehrlich S.D."/>
            <person name="Overbeek R."/>
            <person name="Kyrpides N.C."/>
        </authorList>
    </citation>
    <scope>NUCLEOTIDE SEQUENCE [LARGE SCALE GENOMIC DNA]</scope>
    <source>
        <strain>ATCC 14579 / DSM 31 / CCUG 7414 / JCM 2152 / NBRC 15305 / NCIMB 9373 / NCTC 2599 / NRRL B-3711</strain>
    </source>
</reference>
<organism>
    <name type="scientific">Bacillus cereus (strain ATCC 14579 / DSM 31 / CCUG 7414 / JCM 2152 / NBRC 15305 / NCIMB 9373 / NCTC 2599 / NRRL B-3711)</name>
    <dbReference type="NCBI Taxonomy" id="226900"/>
    <lineage>
        <taxon>Bacteria</taxon>
        <taxon>Bacillati</taxon>
        <taxon>Bacillota</taxon>
        <taxon>Bacilli</taxon>
        <taxon>Bacillales</taxon>
        <taxon>Bacillaceae</taxon>
        <taxon>Bacillus</taxon>
        <taxon>Bacillus cereus group</taxon>
    </lineage>
</organism>
<accession>Q81II2</accession>
<feature type="chain" id="PRO_0000205062" description="Arginine regulator">
    <location>
        <begin position="1"/>
        <end position="149"/>
    </location>
</feature>
<protein>
    <recommendedName>
        <fullName>Arginine regulator</fullName>
    </recommendedName>
</protein>
<evidence type="ECO:0000250" key="1"/>
<evidence type="ECO:0000305" key="2"/>
<sequence length="149" mass="17364">MKKEKRQRLIKQFVKEYEIDKQERLVELLAKKDVLVTQATVSRDIRELNLTKVPSQEGLMIYKVFSEEHLQTDIKLKKKLREVVVKIDCVDQLMVIKTLPGNAHVIGVLFDELDWKEKIGCICGNDTCLIISQSKSDREIIEERLNLII</sequence>
<dbReference type="EMBL" id="AE016877">
    <property type="protein sequence ID" value="AAP07445.1"/>
    <property type="molecule type" value="Genomic_DNA"/>
</dbReference>
<dbReference type="RefSeq" id="NP_830244.1">
    <property type="nucleotide sequence ID" value="NC_004722.1"/>
</dbReference>
<dbReference type="SMR" id="Q81II2"/>
<dbReference type="STRING" id="226900.BC_0405"/>
<dbReference type="KEGG" id="bce:BC0405"/>
<dbReference type="PATRIC" id="fig|226900.8.peg.375"/>
<dbReference type="HOGENOM" id="CLU_097103_3_0_9"/>
<dbReference type="OrthoDB" id="9807089at2"/>
<dbReference type="UniPathway" id="UPA00254"/>
<dbReference type="Proteomes" id="UP000001417">
    <property type="component" value="Chromosome"/>
</dbReference>
<dbReference type="GO" id="GO:0005737">
    <property type="term" value="C:cytoplasm"/>
    <property type="evidence" value="ECO:0007669"/>
    <property type="project" value="UniProtKB-SubCell"/>
</dbReference>
<dbReference type="GO" id="GO:0005667">
    <property type="term" value="C:transcription regulator complex"/>
    <property type="evidence" value="ECO:0000318"/>
    <property type="project" value="GO_Central"/>
</dbReference>
<dbReference type="GO" id="GO:0034618">
    <property type="term" value="F:arginine binding"/>
    <property type="evidence" value="ECO:0007669"/>
    <property type="project" value="InterPro"/>
</dbReference>
<dbReference type="GO" id="GO:0000987">
    <property type="term" value="F:cis-regulatory region sequence-specific DNA binding"/>
    <property type="evidence" value="ECO:0000318"/>
    <property type="project" value="GO_Central"/>
</dbReference>
<dbReference type="GO" id="GO:0003700">
    <property type="term" value="F:DNA-binding transcription factor activity"/>
    <property type="evidence" value="ECO:0007669"/>
    <property type="project" value="UniProtKB-UniRule"/>
</dbReference>
<dbReference type="GO" id="GO:0019547">
    <property type="term" value="P:arginine catabolic process to ornithine"/>
    <property type="evidence" value="ECO:0007669"/>
    <property type="project" value="UniProtKB-UniPathway"/>
</dbReference>
<dbReference type="GO" id="GO:0051259">
    <property type="term" value="P:protein complex oligomerization"/>
    <property type="evidence" value="ECO:0007669"/>
    <property type="project" value="InterPro"/>
</dbReference>
<dbReference type="GO" id="GO:1900079">
    <property type="term" value="P:regulation of arginine biosynthetic process"/>
    <property type="evidence" value="ECO:0007669"/>
    <property type="project" value="UniProtKB-UniRule"/>
</dbReference>
<dbReference type="GO" id="GO:0000821">
    <property type="term" value="P:regulation of arginine metabolic process"/>
    <property type="evidence" value="ECO:0000318"/>
    <property type="project" value="GO_Central"/>
</dbReference>
<dbReference type="Gene3D" id="3.30.1360.40">
    <property type="match status" value="1"/>
</dbReference>
<dbReference type="Gene3D" id="1.10.10.10">
    <property type="entry name" value="Winged helix-like DNA-binding domain superfamily/Winged helix DNA-binding domain"/>
    <property type="match status" value="1"/>
</dbReference>
<dbReference type="HAMAP" id="MF_00173">
    <property type="entry name" value="Arg_repressor"/>
    <property type="match status" value="1"/>
</dbReference>
<dbReference type="InterPro" id="IPR001669">
    <property type="entry name" value="Arg_repress"/>
</dbReference>
<dbReference type="InterPro" id="IPR020899">
    <property type="entry name" value="Arg_repress_C"/>
</dbReference>
<dbReference type="InterPro" id="IPR036251">
    <property type="entry name" value="Arg_repress_C_sf"/>
</dbReference>
<dbReference type="InterPro" id="IPR020900">
    <property type="entry name" value="Arg_repress_DNA-bd"/>
</dbReference>
<dbReference type="InterPro" id="IPR036388">
    <property type="entry name" value="WH-like_DNA-bd_sf"/>
</dbReference>
<dbReference type="InterPro" id="IPR036390">
    <property type="entry name" value="WH_DNA-bd_sf"/>
</dbReference>
<dbReference type="NCBIfam" id="TIGR01529">
    <property type="entry name" value="argR_whole"/>
    <property type="match status" value="1"/>
</dbReference>
<dbReference type="PANTHER" id="PTHR34471">
    <property type="entry name" value="ARGININE REPRESSOR"/>
    <property type="match status" value="1"/>
</dbReference>
<dbReference type="PANTHER" id="PTHR34471:SF1">
    <property type="entry name" value="ARGININE REPRESSOR"/>
    <property type="match status" value="1"/>
</dbReference>
<dbReference type="Pfam" id="PF01316">
    <property type="entry name" value="Arg_repressor"/>
    <property type="match status" value="1"/>
</dbReference>
<dbReference type="Pfam" id="PF02863">
    <property type="entry name" value="Arg_repressor_C"/>
    <property type="match status" value="1"/>
</dbReference>
<dbReference type="PRINTS" id="PR01467">
    <property type="entry name" value="ARGREPRESSOR"/>
</dbReference>
<dbReference type="SUPFAM" id="SSF55252">
    <property type="entry name" value="C-terminal domain of arginine repressor"/>
    <property type="match status" value="1"/>
</dbReference>
<dbReference type="SUPFAM" id="SSF46785">
    <property type="entry name" value="Winged helix' DNA-binding domain"/>
    <property type="match status" value="1"/>
</dbReference>
<gene>
    <name type="primary">argR1</name>
    <name type="ordered locus">BC_0405</name>
</gene>
<keyword id="KW-0056">Arginine metabolism</keyword>
<keyword id="KW-0963">Cytoplasm</keyword>
<keyword id="KW-0238">DNA-binding</keyword>
<keyword id="KW-1185">Reference proteome</keyword>
<keyword id="KW-0804">Transcription</keyword>
<keyword id="KW-0805">Transcription regulation</keyword>
<proteinExistence type="inferred from homology"/>
<comment type="function">
    <text evidence="1">Regulates the transcription of the arc operon, involved in arginine catabolism.</text>
</comment>
<comment type="pathway">
    <text>Amino-acid degradation; L-arginine degradation via ADI pathway.</text>
</comment>
<comment type="subcellular location">
    <subcellularLocation>
        <location evidence="1">Cytoplasm</location>
    </subcellularLocation>
</comment>
<comment type="similarity">
    <text evidence="2">Belongs to the ArgR family.</text>
</comment>